<gene>
    <name evidence="1" type="primary">ubiE</name>
    <name type="ordered locus">RHECIAT_CH0000392</name>
</gene>
<keyword id="KW-0474">Menaquinone biosynthesis</keyword>
<keyword id="KW-0489">Methyltransferase</keyword>
<keyword id="KW-0949">S-adenosyl-L-methionine</keyword>
<keyword id="KW-0808">Transferase</keyword>
<keyword id="KW-0831">Ubiquinone biosynthesis</keyword>
<protein>
    <recommendedName>
        <fullName evidence="1">Ubiquinone/menaquinone biosynthesis C-methyltransferase UbiE</fullName>
        <ecNumber evidence="1">2.1.1.163</ecNumber>
        <ecNumber evidence="1">2.1.1.201</ecNumber>
    </recommendedName>
    <alternativeName>
        <fullName evidence="1">2-methoxy-6-polyprenyl-1,4-benzoquinol methylase</fullName>
    </alternativeName>
    <alternativeName>
        <fullName evidence="1">Demethylmenaquinone methyltransferase</fullName>
    </alternativeName>
</protein>
<dbReference type="EC" id="2.1.1.163" evidence="1"/>
<dbReference type="EC" id="2.1.1.201" evidence="1"/>
<dbReference type="EMBL" id="CP001074">
    <property type="protein sequence ID" value="ACE89386.1"/>
    <property type="molecule type" value="Genomic_DNA"/>
</dbReference>
<dbReference type="SMR" id="B3PZ92"/>
<dbReference type="KEGG" id="rec:RHECIAT_CH0000392"/>
<dbReference type="eggNOG" id="COG2226">
    <property type="taxonomic scope" value="Bacteria"/>
</dbReference>
<dbReference type="HOGENOM" id="CLU_037990_0_1_5"/>
<dbReference type="UniPathway" id="UPA00079">
    <property type="reaction ID" value="UER00169"/>
</dbReference>
<dbReference type="UniPathway" id="UPA00232"/>
<dbReference type="Proteomes" id="UP000008817">
    <property type="component" value="Chromosome"/>
</dbReference>
<dbReference type="GO" id="GO:0008425">
    <property type="term" value="F:2-methoxy-6-polyprenyl-1,4-benzoquinol methyltransferase activity"/>
    <property type="evidence" value="ECO:0007669"/>
    <property type="project" value="UniProtKB-UniRule"/>
</dbReference>
<dbReference type="GO" id="GO:0043770">
    <property type="term" value="F:demethylmenaquinone methyltransferase activity"/>
    <property type="evidence" value="ECO:0007669"/>
    <property type="project" value="UniProtKB-UniRule"/>
</dbReference>
<dbReference type="GO" id="GO:0009060">
    <property type="term" value="P:aerobic respiration"/>
    <property type="evidence" value="ECO:0007669"/>
    <property type="project" value="UniProtKB-UniRule"/>
</dbReference>
<dbReference type="GO" id="GO:0009234">
    <property type="term" value="P:menaquinone biosynthetic process"/>
    <property type="evidence" value="ECO:0007669"/>
    <property type="project" value="UniProtKB-UniRule"/>
</dbReference>
<dbReference type="GO" id="GO:0032259">
    <property type="term" value="P:methylation"/>
    <property type="evidence" value="ECO:0007669"/>
    <property type="project" value="UniProtKB-KW"/>
</dbReference>
<dbReference type="CDD" id="cd02440">
    <property type="entry name" value="AdoMet_MTases"/>
    <property type="match status" value="1"/>
</dbReference>
<dbReference type="Gene3D" id="3.40.50.150">
    <property type="entry name" value="Vaccinia Virus protein VP39"/>
    <property type="match status" value="1"/>
</dbReference>
<dbReference type="HAMAP" id="MF_01813">
    <property type="entry name" value="MenG_UbiE_methyltr"/>
    <property type="match status" value="1"/>
</dbReference>
<dbReference type="InterPro" id="IPR029063">
    <property type="entry name" value="SAM-dependent_MTases_sf"/>
</dbReference>
<dbReference type="InterPro" id="IPR004033">
    <property type="entry name" value="UbiE/COQ5_MeTrFase"/>
</dbReference>
<dbReference type="InterPro" id="IPR023576">
    <property type="entry name" value="UbiE/COQ5_MeTrFase_CS"/>
</dbReference>
<dbReference type="NCBIfam" id="TIGR01934">
    <property type="entry name" value="MenG_MenH_UbiE"/>
    <property type="match status" value="1"/>
</dbReference>
<dbReference type="NCBIfam" id="NF001242">
    <property type="entry name" value="PRK00216.1-3"/>
    <property type="match status" value="1"/>
</dbReference>
<dbReference type="NCBIfam" id="NF001244">
    <property type="entry name" value="PRK00216.1-5"/>
    <property type="match status" value="1"/>
</dbReference>
<dbReference type="PANTHER" id="PTHR43591:SF24">
    <property type="entry name" value="2-METHOXY-6-POLYPRENYL-1,4-BENZOQUINOL METHYLASE, MITOCHONDRIAL"/>
    <property type="match status" value="1"/>
</dbReference>
<dbReference type="PANTHER" id="PTHR43591">
    <property type="entry name" value="METHYLTRANSFERASE"/>
    <property type="match status" value="1"/>
</dbReference>
<dbReference type="Pfam" id="PF01209">
    <property type="entry name" value="Ubie_methyltran"/>
    <property type="match status" value="1"/>
</dbReference>
<dbReference type="SUPFAM" id="SSF53335">
    <property type="entry name" value="S-adenosyl-L-methionine-dependent methyltransferases"/>
    <property type="match status" value="1"/>
</dbReference>
<dbReference type="PROSITE" id="PS51608">
    <property type="entry name" value="SAM_MT_UBIE"/>
    <property type="match status" value="1"/>
</dbReference>
<dbReference type="PROSITE" id="PS01183">
    <property type="entry name" value="UBIE_1"/>
    <property type="match status" value="1"/>
</dbReference>
<dbReference type="PROSITE" id="PS01184">
    <property type="entry name" value="UBIE_2"/>
    <property type="match status" value="1"/>
</dbReference>
<proteinExistence type="inferred from homology"/>
<sequence length="258" mass="28389">MSESRTSADGGMETSYGFREVPGGEKQGLVNQVFHKVAKRYDIMNDVMSMGMHRVWKDAMIAALNPRKEPGYKVLDVAGGTGDIAFRIVEASGRQAHATVLDINGSMLGVGAERAEKKKLSANLTFVEANAEELPFEAASFDAYTIAFGIRNVPRIDVALAEAYRVLKRGGRLLVLEFSEVDMPLLDKIYDAWSFNAIPQFGKAITGDAEPYQYLVESIRKFPNQENFAAMIRQAGFSRVSHTNYTGGIAALHSGWKL</sequence>
<accession>B3PZ92</accession>
<name>UBIE_RHIE6</name>
<feature type="chain" id="PRO_1000187791" description="Ubiquinone/menaquinone biosynthesis C-methyltransferase UbiE">
    <location>
        <begin position="1"/>
        <end position="258"/>
    </location>
</feature>
<feature type="region of interest" description="Disordered" evidence="2">
    <location>
        <begin position="1"/>
        <end position="20"/>
    </location>
</feature>
<feature type="binding site" evidence="1">
    <location>
        <position position="81"/>
    </location>
    <ligand>
        <name>S-adenosyl-L-methionine</name>
        <dbReference type="ChEBI" id="CHEBI:59789"/>
    </ligand>
</feature>
<feature type="binding site" evidence="1">
    <location>
        <position position="102"/>
    </location>
    <ligand>
        <name>S-adenosyl-L-methionine</name>
        <dbReference type="ChEBI" id="CHEBI:59789"/>
    </ligand>
</feature>
<feature type="binding site" evidence="1">
    <location>
        <begin position="130"/>
        <end position="131"/>
    </location>
    <ligand>
        <name>S-adenosyl-L-methionine</name>
        <dbReference type="ChEBI" id="CHEBI:59789"/>
    </ligand>
</feature>
<comment type="function">
    <text evidence="1">Methyltransferase required for the conversion of demethylmenaquinol (DMKH2) to menaquinol (MKH2) and the conversion of 2-polyprenyl-6-methoxy-1,4-benzoquinol (DDMQH2) to 2-polyprenyl-3-methyl-6-methoxy-1,4-benzoquinol (DMQH2).</text>
</comment>
<comment type="catalytic activity">
    <reaction evidence="1">
        <text>a 2-demethylmenaquinol + S-adenosyl-L-methionine = a menaquinol + S-adenosyl-L-homocysteine + H(+)</text>
        <dbReference type="Rhea" id="RHEA:42640"/>
        <dbReference type="Rhea" id="RHEA-COMP:9539"/>
        <dbReference type="Rhea" id="RHEA-COMP:9563"/>
        <dbReference type="ChEBI" id="CHEBI:15378"/>
        <dbReference type="ChEBI" id="CHEBI:18151"/>
        <dbReference type="ChEBI" id="CHEBI:55437"/>
        <dbReference type="ChEBI" id="CHEBI:57856"/>
        <dbReference type="ChEBI" id="CHEBI:59789"/>
        <dbReference type="EC" id="2.1.1.163"/>
    </reaction>
</comment>
<comment type="catalytic activity">
    <reaction evidence="1">
        <text>a 2-methoxy-6-(all-trans-polyprenyl)benzene-1,4-diol + S-adenosyl-L-methionine = a 5-methoxy-2-methyl-3-(all-trans-polyprenyl)benzene-1,4-diol + S-adenosyl-L-homocysteine + H(+)</text>
        <dbReference type="Rhea" id="RHEA:28286"/>
        <dbReference type="Rhea" id="RHEA-COMP:10858"/>
        <dbReference type="Rhea" id="RHEA-COMP:10859"/>
        <dbReference type="ChEBI" id="CHEBI:15378"/>
        <dbReference type="ChEBI" id="CHEBI:57856"/>
        <dbReference type="ChEBI" id="CHEBI:59789"/>
        <dbReference type="ChEBI" id="CHEBI:84166"/>
        <dbReference type="ChEBI" id="CHEBI:84167"/>
        <dbReference type="EC" id="2.1.1.201"/>
    </reaction>
</comment>
<comment type="pathway">
    <text evidence="1">Quinol/quinone metabolism; menaquinone biosynthesis; menaquinol from 1,4-dihydroxy-2-naphthoate: step 2/2.</text>
</comment>
<comment type="pathway">
    <text evidence="1">Cofactor biosynthesis; ubiquinone biosynthesis.</text>
</comment>
<comment type="similarity">
    <text evidence="1">Belongs to the class I-like SAM-binding methyltransferase superfamily. MenG/UbiE family.</text>
</comment>
<organism>
    <name type="scientific">Rhizobium etli (strain CIAT 652)</name>
    <dbReference type="NCBI Taxonomy" id="491916"/>
    <lineage>
        <taxon>Bacteria</taxon>
        <taxon>Pseudomonadati</taxon>
        <taxon>Pseudomonadota</taxon>
        <taxon>Alphaproteobacteria</taxon>
        <taxon>Hyphomicrobiales</taxon>
        <taxon>Rhizobiaceae</taxon>
        <taxon>Rhizobium/Agrobacterium group</taxon>
        <taxon>Rhizobium</taxon>
    </lineage>
</organism>
<evidence type="ECO:0000255" key="1">
    <source>
        <dbReference type="HAMAP-Rule" id="MF_01813"/>
    </source>
</evidence>
<evidence type="ECO:0000256" key="2">
    <source>
        <dbReference type="SAM" id="MobiDB-lite"/>
    </source>
</evidence>
<reference key="1">
    <citation type="journal article" date="2010" name="Appl. Environ. Microbiol.">
        <title>Conserved symbiotic plasmid DNA sequences in the multireplicon pangenomic structure of Rhizobium etli.</title>
        <authorList>
            <person name="Gonzalez V."/>
            <person name="Acosta J.L."/>
            <person name="Santamaria R.I."/>
            <person name="Bustos P."/>
            <person name="Fernandez J.L."/>
            <person name="Hernandez Gonzalez I.L."/>
            <person name="Diaz R."/>
            <person name="Flores M."/>
            <person name="Palacios R."/>
            <person name="Mora J."/>
            <person name="Davila G."/>
        </authorList>
    </citation>
    <scope>NUCLEOTIDE SEQUENCE [LARGE SCALE GENOMIC DNA]</scope>
    <source>
        <strain>CIAT 652</strain>
    </source>
</reference>